<accession>P34753</accession>
<name>PHYA_ASPAW</name>
<dbReference type="EC" id="3.1.3.-" evidence="3"/>
<dbReference type="EC" id="3.1.3.8" evidence="5"/>
<dbReference type="EMBL" id="L02421">
    <property type="protein sequence ID" value="AAA16898.1"/>
    <property type="molecule type" value="Unassigned_DNA"/>
</dbReference>
<dbReference type="PIR" id="JN0889">
    <property type="entry name" value="JN0889"/>
</dbReference>
<dbReference type="SMR" id="P34753"/>
<dbReference type="GlyCosmos" id="P34753">
    <property type="glycosylation" value="10 sites, No reported glycans"/>
</dbReference>
<dbReference type="BRENDA" id="3.1.3.26">
    <property type="organism ID" value="494"/>
</dbReference>
<dbReference type="BRENDA" id="3.1.3.8">
    <property type="organism ID" value="494"/>
</dbReference>
<dbReference type="GO" id="GO:0005576">
    <property type="term" value="C:extracellular region"/>
    <property type="evidence" value="ECO:0007669"/>
    <property type="project" value="UniProtKB-SubCell"/>
</dbReference>
<dbReference type="GO" id="GO:0016158">
    <property type="term" value="F:3-phytase activity"/>
    <property type="evidence" value="ECO:0007669"/>
    <property type="project" value="UniProtKB-EC"/>
</dbReference>
<dbReference type="GO" id="GO:0003993">
    <property type="term" value="F:acid phosphatase activity"/>
    <property type="evidence" value="ECO:0007669"/>
    <property type="project" value="TreeGrafter"/>
</dbReference>
<dbReference type="CDD" id="cd07061">
    <property type="entry name" value="HP_HAP_like"/>
    <property type="match status" value="1"/>
</dbReference>
<dbReference type="FunFam" id="3.40.50.1240:FF:000027">
    <property type="entry name" value="3-phytase A"/>
    <property type="match status" value="1"/>
</dbReference>
<dbReference type="Gene3D" id="3.40.50.1240">
    <property type="entry name" value="Phosphoglycerate mutase-like"/>
    <property type="match status" value="1"/>
</dbReference>
<dbReference type="InterPro" id="IPR033379">
    <property type="entry name" value="Acid_Pase_AS"/>
</dbReference>
<dbReference type="InterPro" id="IPR000560">
    <property type="entry name" value="His_Pase_clade-2"/>
</dbReference>
<dbReference type="InterPro" id="IPR029033">
    <property type="entry name" value="His_PPase_superfam"/>
</dbReference>
<dbReference type="InterPro" id="IPR016274">
    <property type="entry name" value="Histidine_acid_Pase_euk"/>
</dbReference>
<dbReference type="PANTHER" id="PTHR20963:SF24">
    <property type="entry name" value="3-PHYTASE B"/>
    <property type="match status" value="1"/>
</dbReference>
<dbReference type="PANTHER" id="PTHR20963">
    <property type="entry name" value="MULTIPLE INOSITOL POLYPHOSPHATE PHOSPHATASE-RELATED"/>
    <property type="match status" value="1"/>
</dbReference>
<dbReference type="Pfam" id="PF00328">
    <property type="entry name" value="His_Phos_2"/>
    <property type="match status" value="1"/>
</dbReference>
<dbReference type="PIRSF" id="PIRSF000894">
    <property type="entry name" value="Acid_phosphatase"/>
    <property type="match status" value="1"/>
</dbReference>
<dbReference type="SUPFAM" id="SSF53254">
    <property type="entry name" value="Phosphoglycerate mutase-like"/>
    <property type="match status" value="1"/>
</dbReference>
<dbReference type="PROSITE" id="PS00616">
    <property type="entry name" value="HIS_ACID_PHOSPHAT_1"/>
    <property type="match status" value="1"/>
</dbReference>
<dbReference type="PROSITE" id="PS00778">
    <property type="entry name" value="HIS_ACID_PHOSPHAT_2"/>
    <property type="match status" value="1"/>
</dbReference>
<protein>
    <recommendedName>
        <fullName evidence="6">Phytase A</fullName>
        <ecNumber evidence="3">3.1.3.-</ecNumber>
        <ecNumber evidence="5">3.1.3.8</ecNumber>
    </recommendedName>
    <alternativeName>
        <fullName evidence="3">Histidine acid phosphatase phyA</fullName>
        <shortName evidence="3">HAP</shortName>
    </alternativeName>
    <alternativeName>
        <fullName evidence="3">Myo-inositol hexakisphosphate phosphohydrolase A</fullName>
    </alternativeName>
    <alternativeName>
        <fullName evidence="3">Myo-inositol-hexaphosphate 3-phosphohydrolase A</fullName>
    </alternativeName>
</protein>
<sequence>MGVSAVLLPLYLLAGVTSGLAVPASRNQSTCDTVDQGYQCFSETSHLWGQYAPFFSLANESAISPDVPAGCRVTFAQVLSRHGARYPTESKGKKYSALIEEIQQNVTTFDGKYAFLKTYNYSLGADDLTPFGEQELVNSGIKFYQRYESLTRNIIPFIRSSGSSRVIASGEKFIEGFQSTKLKDPRAQPGQSSPKIDVVISEASSSNNTLDPGTCTVFEDSELADTVEANFTATFAPSIRQRLENDLSGVTLTDTEVTYLMDMCSFDTISTSTVDTKLSPFCDLFTHDEWIHYDYLQSLKKYYGHGAGNPLGPTQGVGYANELIARLTHSPVHDDTSSNHTLDSNPATFPLNSTLYADFSHDNGIISILFALGLYNGTKPLSTTTVENITQTDGFSSAWTVPFASRLYVEMMQCQAEQEPLVRVLVNDRVVPLHGCPIDALGRCTRDSFVRGLSFARSGGDWAECSA</sequence>
<reference key="1">
    <citation type="journal article" date="1993" name="Gene">
        <title>The cloning and sequencing of the genes encoding phytase (phy) and pH 2.5-optimum acid phosphatase (aph) from Aspergillus niger var. awamori.</title>
        <authorList>
            <person name="Piddington C.S."/>
            <person name="Houston C.S."/>
            <person name="Paloheimo M.T."/>
            <person name="Cantrell M.A."/>
            <person name="Miettinen-Oinonen A."/>
            <person name="Nevalainen H."/>
            <person name="Rambosek J.A."/>
        </authorList>
    </citation>
    <scope>NUCLEOTIDE SEQUENCE [GENOMIC DNA]</scope>
    <scope>FUNCTION</scope>
    <scope>CATALYTIC ACTIVITY</scope>
    <source>
        <strain>ALK0243</strain>
    </source>
</reference>
<keyword id="KW-1015">Disulfide bond</keyword>
<keyword id="KW-0325">Glycoprotein</keyword>
<keyword id="KW-0378">Hydrolase</keyword>
<keyword id="KW-0964">Secreted</keyword>
<keyword id="KW-0732">Signal</keyword>
<proteinExistence type="evidence at protein level"/>
<gene>
    <name type="primary">phyA</name>
    <name evidence="6" type="synonym">phy</name>
</gene>
<organism>
    <name type="scientific">Aspergillus awamori</name>
    <name type="common">Black koji mold</name>
    <dbReference type="NCBI Taxonomy" id="105351"/>
    <lineage>
        <taxon>Eukaryota</taxon>
        <taxon>Fungi</taxon>
        <taxon>Dikarya</taxon>
        <taxon>Ascomycota</taxon>
        <taxon>Pezizomycotina</taxon>
        <taxon>Eurotiomycetes</taxon>
        <taxon>Eurotiomycetidae</taxon>
        <taxon>Eurotiales</taxon>
        <taxon>Aspergillaceae</taxon>
        <taxon>Aspergillus</taxon>
    </lineage>
</organism>
<feature type="signal peptide" evidence="4">
    <location>
        <begin position="1"/>
        <end position="23"/>
    </location>
</feature>
<feature type="chain" id="PRO_0000023971" description="Phytase A">
    <location>
        <begin position="24"/>
        <end position="467"/>
    </location>
</feature>
<feature type="active site" description="Nucleophile" evidence="2">
    <location>
        <position position="82"/>
    </location>
</feature>
<feature type="binding site" evidence="3">
    <location>
        <position position="50"/>
    </location>
    <ligand>
        <name>1D-myo-inositol hexakisphosphate</name>
        <dbReference type="ChEBI" id="CHEBI:58130"/>
    </ligand>
</feature>
<feature type="binding site" evidence="3">
    <location>
        <position position="51"/>
    </location>
    <ligand>
        <name>1D-myo-inositol hexakisphosphate</name>
        <dbReference type="ChEBI" id="CHEBI:58130"/>
    </ligand>
</feature>
<feature type="binding site" evidence="3">
    <location>
        <position position="81"/>
    </location>
    <ligand>
        <name>1D-myo-inositol hexakisphosphate</name>
        <dbReference type="ChEBI" id="CHEBI:58130"/>
    </ligand>
</feature>
<feature type="binding site" evidence="3">
    <location>
        <position position="82"/>
    </location>
    <ligand>
        <name>1D-myo-inositol hexakisphosphate</name>
        <dbReference type="ChEBI" id="CHEBI:58130"/>
    </ligand>
</feature>
<feature type="binding site" evidence="3">
    <location>
        <position position="85"/>
    </location>
    <ligand>
        <name>1D-myo-inositol hexakisphosphate</name>
        <dbReference type="ChEBI" id="CHEBI:58130"/>
    </ligand>
</feature>
<feature type="binding site" evidence="3">
    <location>
        <position position="88"/>
    </location>
    <ligand>
        <name>1D-myo-inositol hexakisphosphate</name>
        <dbReference type="ChEBI" id="CHEBI:58130"/>
    </ligand>
</feature>
<feature type="binding site" evidence="3">
    <location>
        <position position="165"/>
    </location>
    <ligand>
        <name>1D-myo-inositol hexakisphosphate</name>
        <dbReference type="ChEBI" id="CHEBI:58130"/>
    </ligand>
</feature>
<feature type="binding site" evidence="3">
    <location>
        <position position="301"/>
    </location>
    <ligand>
        <name>1D-myo-inositol hexakisphosphate</name>
        <dbReference type="ChEBI" id="CHEBI:58130"/>
    </ligand>
</feature>
<feature type="binding site" evidence="3">
    <location>
        <position position="361"/>
    </location>
    <ligand>
        <name>1D-myo-inositol hexakisphosphate</name>
        <dbReference type="ChEBI" id="CHEBI:58130"/>
    </ligand>
</feature>
<feature type="binding site" evidence="3">
    <location>
        <position position="362"/>
    </location>
    <ligand>
        <name>1D-myo-inositol hexakisphosphate</name>
        <dbReference type="ChEBI" id="CHEBI:58130"/>
    </ligand>
</feature>
<feature type="glycosylation site" description="N-linked (GlcNAc...) asparagine" evidence="4">
    <location>
        <position position="27"/>
    </location>
</feature>
<feature type="glycosylation site" description="N-linked (GlcNAc...) asparagine" evidence="4">
    <location>
        <position position="59"/>
    </location>
</feature>
<feature type="glycosylation site" description="N-linked (GlcNAc...) asparagine" evidence="4">
    <location>
        <position position="105"/>
    </location>
</feature>
<feature type="glycosylation site" description="N-linked (GlcNAc...) asparagine" evidence="4">
    <location>
        <position position="120"/>
    </location>
</feature>
<feature type="glycosylation site" description="N-linked (GlcNAc...) asparagine" evidence="4">
    <location>
        <position position="207"/>
    </location>
</feature>
<feature type="glycosylation site" description="N-linked (GlcNAc...) asparagine" evidence="4">
    <location>
        <position position="230"/>
    </location>
</feature>
<feature type="glycosylation site" description="N-linked (GlcNAc...) asparagine" evidence="4">
    <location>
        <position position="339"/>
    </location>
</feature>
<feature type="glycosylation site" description="N-linked (GlcNAc...) asparagine" evidence="4">
    <location>
        <position position="352"/>
    </location>
</feature>
<feature type="glycosylation site" description="N-linked (GlcNAc...) asparagine" evidence="4">
    <location>
        <position position="376"/>
    </location>
</feature>
<feature type="glycosylation site" description="N-linked (GlcNAc...) asparagine" evidence="4">
    <location>
        <position position="388"/>
    </location>
</feature>
<feature type="disulfide bond" evidence="2">
    <location>
        <begin position="31"/>
        <end position="40"/>
    </location>
</feature>
<feature type="disulfide bond" evidence="2">
    <location>
        <begin position="71"/>
        <end position="414"/>
    </location>
</feature>
<feature type="disulfide bond" evidence="2">
    <location>
        <begin position="215"/>
        <end position="465"/>
    </location>
</feature>
<feature type="disulfide bond" evidence="2">
    <location>
        <begin position="264"/>
        <end position="282"/>
    </location>
</feature>
<feature type="disulfide bond" evidence="2">
    <location>
        <begin position="436"/>
        <end position="444"/>
    </location>
</feature>
<evidence type="ECO:0000250" key="1">
    <source>
        <dbReference type="UniProtKB" id="O00085"/>
    </source>
</evidence>
<evidence type="ECO:0000250" key="2">
    <source>
        <dbReference type="UniProtKB" id="O00092"/>
    </source>
</evidence>
<evidence type="ECO:0000250" key="3">
    <source>
        <dbReference type="UniProtKB" id="P34752"/>
    </source>
</evidence>
<evidence type="ECO:0000255" key="4"/>
<evidence type="ECO:0000269" key="5">
    <source>
    </source>
</evidence>
<evidence type="ECO:0000303" key="6">
    <source>
    </source>
</evidence>
<evidence type="ECO:0000305" key="7"/>
<comment type="function">
    <text evidence="3 5">Catalyzes the phosphate monoester hydrolysis of phytic acid (myo-inositol hexakisphosphate), which results in the stepwise formation of myo-inositol pentakis-, tetrakis-, tris-, bis-, and monophosphates, as well as the liberation of inorganic phosphate (PubMed:8224894). Myo-inositol 2-monophosphate is the end product (By similarity).</text>
</comment>
<comment type="catalytic activity">
    <reaction evidence="5">
        <text>1D-myo-inositol hexakisphosphate + H2O = 1D-myo-inositol 1,2,4,5,6-pentakisphosphate + phosphate</text>
        <dbReference type="Rhea" id="RHEA:16989"/>
        <dbReference type="ChEBI" id="CHEBI:15377"/>
        <dbReference type="ChEBI" id="CHEBI:43474"/>
        <dbReference type="ChEBI" id="CHEBI:57798"/>
        <dbReference type="ChEBI" id="CHEBI:58130"/>
        <dbReference type="EC" id="3.1.3.8"/>
    </reaction>
    <physiologicalReaction direction="left-to-right" evidence="5">
        <dbReference type="Rhea" id="RHEA:16990"/>
    </physiologicalReaction>
</comment>
<comment type="catalytic activity">
    <reaction evidence="3">
        <text>1D-myo-inositol 1,2,4,5,6-pentakisphosphate + H2O = 1D-myo-inositol 1,2,5,6-tetrakisphosphate + phosphate</text>
        <dbReference type="Rhea" id="RHEA:77115"/>
        <dbReference type="ChEBI" id="CHEBI:15377"/>
        <dbReference type="ChEBI" id="CHEBI:43474"/>
        <dbReference type="ChEBI" id="CHEBI:57798"/>
        <dbReference type="ChEBI" id="CHEBI:195535"/>
    </reaction>
    <physiologicalReaction direction="left-to-right" evidence="3">
        <dbReference type="Rhea" id="RHEA:77116"/>
    </physiologicalReaction>
</comment>
<comment type="catalytic activity">
    <reaction evidence="3">
        <text>1D-myo-inositol 1,2,5,6-tetrakisphosphate + H2O = 1D-myo-inositol 1,2,6-trisphosphate + phosphate</text>
        <dbReference type="Rhea" id="RHEA:77119"/>
        <dbReference type="ChEBI" id="CHEBI:15377"/>
        <dbReference type="ChEBI" id="CHEBI:43474"/>
        <dbReference type="ChEBI" id="CHEBI:195535"/>
        <dbReference type="ChEBI" id="CHEBI:195537"/>
    </reaction>
    <physiologicalReaction direction="left-to-right" evidence="3">
        <dbReference type="Rhea" id="RHEA:77120"/>
    </physiologicalReaction>
</comment>
<comment type="catalytic activity">
    <reaction evidence="3">
        <text>1D-myo-inositol 1,2,6-trisphosphate + H2O = 1D-myo-inositol 1,2-bisphosphate + phosphate</text>
        <dbReference type="Rhea" id="RHEA:77131"/>
        <dbReference type="ChEBI" id="CHEBI:15377"/>
        <dbReference type="ChEBI" id="CHEBI:43474"/>
        <dbReference type="ChEBI" id="CHEBI:195537"/>
        <dbReference type="ChEBI" id="CHEBI:195539"/>
    </reaction>
    <physiologicalReaction direction="left-to-right" evidence="3">
        <dbReference type="Rhea" id="RHEA:77132"/>
    </physiologicalReaction>
</comment>
<comment type="catalytic activity">
    <reaction evidence="3">
        <text>1D-myo-inositol 1,2-bisphosphate + H2O = 1D-myo-inositol 2-phosphate + phosphate</text>
        <dbReference type="Rhea" id="RHEA:77135"/>
        <dbReference type="ChEBI" id="CHEBI:15377"/>
        <dbReference type="ChEBI" id="CHEBI:43474"/>
        <dbReference type="ChEBI" id="CHEBI:84142"/>
        <dbReference type="ChEBI" id="CHEBI:195539"/>
    </reaction>
    <physiologicalReaction direction="left-to-right" evidence="3">
        <dbReference type="Rhea" id="RHEA:77136"/>
    </physiologicalReaction>
</comment>
<comment type="subunit">
    <text evidence="1">Monomer.</text>
</comment>
<comment type="subcellular location">
    <subcellularLocation>
        <location evidence="7">Secreted</location>
    </subcellularLocation>
</comment>
<comment type="biotechnology">
    <text evidence="3">Phytic acid is the major storage form of phosphorus in plant seeds and, thus, in seed-based animal feed. Phytases are therefore of considerable economic interest.</text>
</comment>
<comment type="similarity">
    <text evidence="7">Belongs to the histidine acid phosphatase family.</text>
</comment>